<organism>
    <name type="scientific">Staphylococcus aureus (strain NCTC 8325 / PS 47)</name>
    <dbReference type="NCBI Taxonomy" id="93061"/>
    <lineage>
        <taxon>Bacteria</taxon>
        <taxon>Bacillati</taxon>
        <taxon>Bacillota</taxon>
        <taxon>Bacilli</taxon>
        <taxon>Bacillales</taxon>
        <taxon>Staphylococcaceae</taxon>
        <taxon>Staphylococcus</taxon>
    </lineage>
</organism>
<gene>
    <name evidence="1" type="primary">nadK</name>
    <name type="ordered locus">SAOUHSC_00943</name>
</gene>
<name>NADK_STAA8</name>
<proteinExistence type="inferred from homology"/>
<dbReference type="EC" id="2.7.1.23" evidence="1"/>
<dbReference type="EMBL" id="CP000253">
    <property type="protein sequence ID" value="ABD30068.1"/>
    <property type="molecule type" value="Genomic_DNA"/>
</dbReference>
<dbReference type="RefSeq" id="WP_001270834.1">
    <property type="nucleotide sequence ID" value="NZ_LS483365.1"/>
</dbReference>
<dbReference type="SMR" id="Q2G1Z9"/>
<dbReference type="STRING" id="93061.SAOUHSC_00943"/>
<dbReference type="PaxDb" id="1280-SAXN108_1003"/>
<dbReference type="KEGG" id="sao:SAOUHSC_00943"/>
<dbReference type="PATRIC" id="fig|93061.5.peg.864"/>
<dbReference type="eggNOG" id="COG0061">
    <property type="taxonomic scope" value="Bacteria"/>
</dbReference>
<dbReference type="HOGENOM" id="CLU_008831_0_3_9"/>
<dbReference type="OrthoDB" id="9774737at2"/>
<dbReference type="PRO" id="PR:Q2G1Z9"/>
<dbReference type="Proteomes" id="UP000008816">
    <property type="component" value="Chromosome"/>
</dbReference>
<dbReference type="GO" id="GO:0005737">
    <property type="term" value="C:cytoplasm"/>
    <property type="evidence" value="ECO:0007669"/>
    <property type="project" value="UniProtKB-SubCell"/>
</dbReference>
<dbReference type="GO" id="GO:0005524">
    <property type="term" value="F:ATP binding"/>
    <property type="evidence" value="ECO:0007669"/>
    <property type="project" value="UniProtKB-KW"/>
</dbReference>
<dbReference type="GO" id="GO:0046872">
    <property type="term" value="F:metal ion binding"/>
    <property type="evidence" value="ECO:0007669"/>
    <property type="project" value="UniProtKB-UniRule"/>
</dbReference>
<dbReference type="GO" id="GO:0051287">
    <property type="term" value="F:NAD binding"/>
    <property type="evidence" value="ECO:0007669"/>
    <property type="project" value="UniProtKB-ARBA"/>
</dbReference>
<dbReference type="GO" id="GO:0003951">
    <property type="term" value="F:NAD+ kinase activity"/>
    <property type="evidence" value="ECO:0000318"/>
    <property type="project" value="GO_Central"/>
</dbReference>
<dbReference type="GO" id="GO:0019674">
    <property type="term" value="P:NAD metabolic process"/>
    <property type="evidence" value="ECO:0007669"/>
    <property type="project" value="InterPro"/>
</dbReference>
<dbReference type="GO" id="GO:0006741">
    <property type="term" value="P:NADP biosynthetic process"/>
    <property type="evidence" value="ECO:0000318"/>
    <property type="project" value="GO_Central"/>
</dbReference>
<dbReference type="FunFam" id="2.60.200.30:FF:000002">
    <property type="entry name" value="NAD kinase"/>
    <property type="match status" value="1"/>
</dbReference>
<dbReference type="Gene3D" id="3.40.50.10330">
    <property type="entry name" value="Probable inorganic polyphosphate/atp-NAD kinase, domain 1"/>
    <property type="match status" value="1"/>
</dbReference>
<dbReference type="Gene3D" id="2.60.200.30">
    <property type="entry name" value="Probable inorganic polyphosphate/atp-NAD kinase, domain 2"/>
    <property type="match status" value="1"/>
</dbReference>
<dbReference type="HAMAP" id="MF_00361">
    <property type="entry name" value="NAD_kinase"/>
    <property type="match status" value="1"/>
</dbReference>
<dbReference type="InterPro" id="IPR017438">
    <property type="entry name" value="ATP-NAD_kinase_N"/>
</dbReference>
<dbReference type="InterPro" id="IPR017437">
    <property type="entry name" value="ATP-NAD_kinase_PpnK-typ_C"/>
</dbReference>
<dbReference type="InterPro" id="IPR016064">
    <property type="entry name" value="NAD/diacylglycerol_kinase_sf"/>
</dbReference>
<dbReference type="InterPro" id="IPR002504">
    <property type="entry name" value="NADK"/>
</dbReference>
<dbReference type="NCBIfam" id="NF003424">
    <property type="entry name" value="PRK04885.1"/>
    <property type="match status" value="1"/>
</dbReference>
<dbReference type="PANTHER" id="PTHR20275">
    <property type="entry name" value="NAD KINASE"/>
    <property type="match status" value="1"/>
</dbReference>
<dbReference type="PANTHER" id="PTHR20275:SF0">
    <property type="entry name" value="NAD KINASE"/>
    <property type="match status" value="1"/>
</dbReference>
<dbReference type="Pfam" id="PF01513">
    <property type="entry name" value="NAD_kinase"/>
    <property type="match status" value="1"/>
</dbReference>
<dbReference type="Pfam" id="PF20143">
    <property type="entry name" value="NAD_kinase_C"/>
    <property type="match status" value="1"/>
</dbReference>
<dbReference type="SUPFAM" id="SSF111331">
    <property type="entry name" value="NAD kinase/diacylglycerol kinase-like"/>
    <property type="match status" value="1"/>
</dbReference>
<accession>Q2G1Z9</accession>
<protein>
    <recommendedName>
        <fullName evidence="1">NAD kinase</fullName>
        <ecNumber evidence="1">2.7.1.23</ecNumber>
    </recommendedName>
    <alternativeName>
        <fullName evidence="1">ATP-dependent NAD kinase</fullName>
    </alternativeName>
</protein>
<reference key="1">
    <citation type="book" date="2006" name="Gram positive pathogens, 2nd edition">
        <title>The Staphylococcus aureus NCTC 8325 genome.</title>
        <editorList>
            <person name="Fischetti V."/>
            <person name="Novick R."/>
            <person name="Ferretti J."/>
            <person name="Portnoy D."/>
            <person name="Rood J."/>
        </editorList>
        <authorList>
            <person name="Gillaspy A.F."/>
            <person name="Worrell V."/>
            <person name="Orvis J."/>
            <person name="Roe B.A."/>
            <person name="Dyer D.W."/>
            <person name="Iandolo J.J."/>
        </authorList>
    </citation>
    <scope>NUCLEOTIDE SEQUENCE [LARGE SCALE GENOMIC DNA]</scope>
    <source>
        <strain>NCTC 8325 / PS 47</strain>
    </source>
</reference>
<sequence>MRYTILTKGDSKSNALKHKMMNYMKDFRMIEDSENPEIVISVGGDGTLLQAFHQYSHMLSKVAFVGVHTGHLGFYADWLPHEVEKLIIEINNSEFQVIEYPLLEIIMRYNDNGYETRYLALNEATMKTENGSTLVVDVNLRGKHFERFRGDGLCVSTPSGSTAYNKALGGALIHPSLEAMQITEIASINNRVFRTVGSPLVLPKHHTCLISPVNHDTIRMTIDHVSIKHKNVNSIQYRVANEKVRFARFRPFPFWKRVHDSFISSDEER</sequence>
<feature type="chain" id="PRO_1000005446" description="NAD kinase">
    <location>
        <begin position="1"/>
        <end position="269"/>
    </location>
</feature>
<feature type="active site" description="Proton acceptor" evidence="1">
    <location>
        <position position="45"/>
    </location>
</feature>
<feature type="binding site" evidence="1">
    <location>
        <begin position="45"/>
        <end position="46"/>
    </location>
    <ligand>
        <name>NAD(+)</name>
        <dbReference type="ChEBI" id="CHEBI:57540"/>
    </ligand>
</feature>
<feature type="binding site" evidence="1">
    <location>
        <begin position="122"/>
        <end position="123"/>
    </location>
    <ligand>
        <name>NAD(+)</name>
        <dbReference type="ChEBI" id="CHEBI:57540"/>
    </ligand>
</feature>
<feature type="binding site" evidence="1">
    <location>
        <position position="149"/>
    </location>
    <ligand>
        <name>NAD(+)</name>
        <dbReference type="ChEBI" id="CHEBI:57540"/>
    </ligand>
</feature>
<feature type="binding site" evidence="1">
    <location>
        <position position="151"/>
    </location>
    <ligand>
        <name>NAD(+)</name>
        <dbReference type="ChEBI" id="CHEBI:57540"/>
    </ligand>
</feature>
<feature type="binding site" evidence="1">
    <location>
        <position position="186"/>
    </location>
    <ligand>
        <name>NAD(+)</name>
        <dbReference type="ChEBI" id="CHEBI:57540"/>
    </ligand>
</feature>
<keyword id="KW-0067">ATP-binding</keyword>
<keyword id="KW-0963">Cytoplasm</keyword>
<keyword id="KW-0418">Kinase</keyword>
<keyword id="KW-0520">NAD</keyword>
<keyword id="KW-0521">NADP</keyword>
<keyword id="KW-0547">Nucleotide-binding</keyword>
<keyword id="KW-1185">Reference proteome</keyword>
<keyword id="KW-0808">Transferase</keyword>
<evidence type="ECO:0000255" key="1">
    <source>
        <dbReference type="HAMAP-Rule" id="MF_00361"/>
    </source>
</evidence>
<comment type="function">
    <text evidence="1">Involved in the regulation of the intracellular balance of NAD and NADP, and is a key enzyme in the biosynthesis of NADP. Catalyzes specifically the phosphorylation on 2'-hydroxyl of the adenosine moiety of NAD to yield NADP.</text>
</comment>
<comment type="catalytic activity">
    <reaction evidence="1">
        <text>NAD(+) + ATP = ADP + NADP(+) + H(+)</text>
        <dbReference type="Rhea" id="RHEA:18629"/>
        <dbReference type="ChEBI" id="CHEBI:15378"/>
        <dbReference type="ChEBI" id="CHEBI:30616"/>
        <dbReference type="ChEBI" id="CHEBI:57540"/>
        <dbReference type="ChEBI" id="CHEBI:58349"/>
        <dbReference type="ChEBI" id="CHEBI:456216"/>
        <dbReference type="EC" id="2.7.1.23"/>
    </reaction>
</comment>
<comment type="cofactor">
    <cofactor evidence="1">
        <name>a divalent metal cation</name>
        <dbReference type="ChEBI" id="CHEBI:60240"/>
    </cofactor>
</comment>
<comment type="subcellular location">
    <subcellularLocation>
        <location evidence="1">Cytoplasm</location>
    </subcellularLocation>
</comment>
<comment type="similarity">
    <text evidence="1">Belongs to the NAD kinase family.</text>
</comment>